<feature type="chain" id="PRO_1000056315" description="Ubiquinone/menaquinone biosynthesis C-methyltransferase UbiE">
    <location>
        <begin position="1"/>
        <end position="253"/>
    </location>
</feature>
<feature type="binding site" evidence="1">
    <location>
        <position position="76"/>
    </location>
    <ligand>
        <name>S-adenosyl-L-methionine</name>
        <dbReference type="ChEBI" id="CHEBI:59789"/>
    </ligand>
</feature>
<feature type="binding site" evidence="1">
    <location>
        <position position="97"/>
    </location>
    <ligand>
        <name>S-adenosyl-L-methionine</name>
        <dbReference type="ChEBI" id="CHEBI:59789"/>
    </ligand>
</feature>
<feature type="binding site" evidence="1">
    <location>
        <begin position="125"/>
        <end position="126"/>
    </location>
    <ligand>
        <name>S-adenosyl-L-methionine</name>
        <dbReference type="ChEBI" id="CHEBI:59789"/>
    </ligand>
</feature>
<feature type="binding site" evidence="1">
    <location>
        <position position="142"/>
    </location>
    <ligand>
        <name>S-adenosyl-L-methionine</name>
        <dbReference type="ChEBI" id="CHEBI:59789"/>
    </ligand>
</feature>
<organism>
    <name type="scientific">Xanthomonas oryzae pv. oryzae (strain MAFF 311018)</name>
    <dbReference type="NCBI Taxonomy" id="342109"/>
    <lineage>
        <taxon>Bacteria</taxon>
        <taxon>Pseudomonadati</taxon>
        <taxon>Pseudomonadota</taxon>
        <taxon>Gammaproteobacteria</taxon>
        <taxon>Lysobacterales</taxon>
        <taxon>Lysobacteraceae</taxon>
        <taxon>Xanthomonas</taxon>
    </lineage>
</organism>
<name>UBIE_XANOM</name>
<gene>
    <name evidence="1" type="primary">ubiE</name>
    <name type="ordered locus">XOO3758</name>
</gene>
<accession>Q2NYW4</accession>
<proteinExistence type="inferred from homology"/>
<reference key="1">
    <citation type="journal article" date="2005" name="Jpn. Agric. Res. Q.">
        <title>Genome sequence of Xanthomonas oryzae pv. oryzae suggests contribution of large numbers of effector genes and insertion sequences to its race diversity.</title>
        <authorList>
            <person name="Ochiai H."/>
            <person name="Inoue Y."/>
            <person name="Takeya M."/>
            <person name="Sasaki A."/>
            <person name="Kaku H."/>
        </authorList>
    </citation>
    <scope>NUCLEOTIDE SEQUENCE [LARGE SCALE GENOMIC DNA]</scope>
    <source>
        <strain>MAFF 311018</strain>
    </source>
</reference>
<evidence type="ECO:0000255" key="1">
    <source>
        <dbReference type="HAMAP-Rule" id="MF_01813"/>
    </source>
</evidence>
<sequence>MSESPYTSGTTHFGFRDVAAKDKQKLVGEVFTSVARNYDLMNDLMSLGVHRAWKRYFVTTAQVKPGDRVLDLAGGTGDIAVLLKERVGNEGAVVLGDINAGMLSVGRDRLTNRGLVSGFDYVQCNAEALPFPDQSFDLVTISFGLRNVTDKDAALREMYRVLKVGGQARVLEFSEVTAEWFKPIYDFHSFKILPKLGKLFARDADSYQYLAESIRKHPPQESLKGMMGEAGFARCHFKNLTGGIVAIHSGYKI</sequence>
<dbReference type="EC" id="2.1.1.163" evidence="1"/>
<dbReference type="EC" id="2.1.1.201" evidence="1"/>
<dbReference type="EMBL" id="AP008229">
    <property type="protein sequence ID" value="BAE70513.1"/>
    <property type="molecule type" value="Genomic_DNA"/>
</dbReference>
<dbReference type="RefSeq" id="WP_011409470.1">
    <property type="nucleotide sequence ID" value="NC_007705.1"/>
</dbReference>
<dbReference type="SMR" id="Q2NYW4"/>
<dbReference type="KEGG" id="xom:XOO3758"/>
<dbReference type="HOGENOM" id="CLU_037990_0_0_6"/>
<dbReference type="UniPathway" id="UPA00079">
    <property type="reaction ID" value="UER00169"/>
</dbReference>
<dbReference type="UniPathway" id="UPA00232"/>
<dbReference type="GO" id="GO:0008425">
    <property type="term" value="F:2-methoxy-6-polyprenyl-1,4-benzoquinol methyltransferase activity"/>
    <property type="evidence" value="ECO:0007669"/>
    <property type="project" value="UniProtKB-UniRule"/>
</dbReference>
<dbReference type="GO" id="GO:0043770">
    <property type="term" value="F:demethylmenaquinone methyltransferase activity"/>
    <property type="evidence" value="ECO:0007669"/>
    <property type="project" value="UniProtKB-UniRule"/>
</dbReference>
<dbReference type="GO" id="GO:0009060">
    <property type="term" value="P:aerobic respiration"/>
    <property type="evidence" value="ECO:0007669"/>
    <property type="project" value="UniProtKB-UniRule"/>
</dbReference>
<dbReference type="GO" id="GO:0009234">
    <property type="term" value="P:menaquinone biosynthetic process"/>
    <property type="evidence" value="ECO:0007669"/>
    <property type="project" value="UniProtKB-UniRule"/>
</dbReference>
<dbReference type="GO" id="GO:0032259">
    <property type="term" value="P:methylation"/>
    <property type="evidence" value="ECO:0007669"/>
    <property type="project" value="UniProtKB-KW"/>
</dbReference>
<dbReference type="CDD" id="cd02440">
    <property type="entry name" value="AdoMet_MTases"/>
    <property type="match status" value="1"/>
</dbReference>
<dbReference type="Gene3D" id="3.40.50.150">
    <property type="entry name" value="Vaccinia Virus protein VP39"/>
    <property type="match status" value="1"/>
</dbReference>
<dbReference type="HAMAP" id="MF_01813">
    <property type="entry name" value="MenG_UbiE_methyltr"/>
    <property type="match status" value="1"/>
</dbReference>
<dbReference type="InterPro" id="IPR029063">
    <property type="entry name" value="SAM-dependent_MTases_sf"/>
</dbReference>
<dbReference type="InterPro" id="IPR004033">
    <property type="entry name" value="UbiE/COQ5_MeTrFase"/>
</dbReference>
<dbReference type="InterPro" id="IPR023576">
    <property type="entry name" value="UbiE/COQ5_MeTrFase_CS"/>
</dbReference>
<dbReference type="NCBIfam" id="TIGR01934">
    <property type="entry name" value="MenG_MenH_UbiE"/>
    <property type="match status" value="1"/>
</dbReference>
<dbReference type="NCBIfam" id="NF001242">
    <property type="entry name" value="PRK00216.1-3"/>
    <property type="match status" value="1"/>
</dbReference>
<dbReference type="NCBIfam" id="NF001244">
    <property type="entry name" value="PRK00216.1-5"/>
    <property type="match status" value="1"/>
</dbReference>
<dbReference type="PANTHER" id="PTHR43591:SF24">
    <property type="entry name" value="2-METHOXY-6-POLYPRENYL-1,4-BENZOQUINOL METHYLASE, MITOCHONDRIAL"/>
    <property type="match status" value="1"/>
</dbReference>
<dbReference type="PANTHER" id="PTHR43591">
    <property type="entry name" value="METHYLTRANSFERASE"/>
    <property type="match status" value="1"/>
</dbReference>
<dbReference type="Pfam" id="PF01209">
    <property type="entry name" value="Ubie_methyltran"/>
    <property type="match status" value="1"/>
</dbReference>
<dbReference type="SUPFAM" id="SSF53335">
    <property type="entry name" value="S-adenosyl-L-methionine-dependent methyltransferases"/>
    <property type="match status" value="1"/>
</dbReference>
<dbReference type="PROSITE" id="PS51608">
    <property type="entry name" value="SAM_MT_UBIE"/>
    <property type="match status" value="1"/>
</dbReference>
<dbReference type="PROSITE" id="PS01183">
    <property type="entry name" value="UBIE_1"/>
    <property type="match status" value="1"/>
</dbReference>
<dbReference type="PROSITE" id="PS01184">
    <property type="entry name" value="UBIE_2"/>
    <property type="match status" value="1"/>
</dbReference>
<protein>
    <recommendedName>
        <fullName evidence="1">Ubiquinone/menaquinone biosynthesis C-methyltransferase UbiE</fullName>
        <ecNumber evidence="1">2.1.1.163</ecNumber>
        <ecNumber evidence="1">2.1.1.201</ecNumber>
    </recommendedName>
    <alternativeName>
        <fullName evidence="1">2-methoxy-6-polyprenyl-1,4-benzoquinol methylase</fullName>
    </alternativeName>
    <alternativeName>
        <fullName evidence="1">Demethylmenaquinone methyltransferase</fullName>
    </alternativeName>
</protein>
<keyword id="KW-0474">Menaquinone biosynthesis</keyword>
<keyword id="KW-0489">Methyltransferase</keyword>
<keyword id="KW-0949">S-adenosyl-L-methionine</keyword>
<keyword id="KW-0808">Transferase</keyword>
<keyword id="KW-0831">Ubiquinone biosynthesis</keyword>
<comment type="function">
    <text evidence="1">Methyltransferase required for the conversion of demethylmenaquinol (DMKH2) to menaquinol (MKH2) and the conversion of 2-polyprenyl-6-methoxy-1,4-benzoquinol (DDMQH2) to 2-polyprenyl-3-methyl-6-methoxy-1,4-benzoquinol (DMQH2).</text>
</comment>
<comment type="catalytic activity">
    <reaction evidence="1">
        <text>a 2-demethylmenaquinol + S-adenosyl-L-methionine = a menaquinol + S-adenosyl-L-homocysteine + H(+)</text>
        <dbReference type="Rhea" id="RHEA:42640"/>
        <dbReference type="Rhea" id="RHEA-COMP:9539"/>
        <dbReference type="Rhea" id="RHEA-COMP:9563"/>
        <dbReference type="ChEBI" id="CHEBI:15378"/>
        <dbReference type="ChEBI" id="CHEBI:18151"/>
        <dbReference type="ChEBI" id="CHEBI:55437"/>
        <dbReference type="ChEBI" id="CHEBI:57856"/>
        <dbReference type="ChEBI" id="CHEBI:59789"/>
        <dbReference type="EC" id="2.1.1.163"/>
    </reaction>
</comment>
<comment type="catalytic activity">
    <reaction evidence="1">
        <text>a 2-methoxy-6-(all-trans-polyprenyl)benzene-1,4-diol + S-adenosyl-L-methionine = a 5-methoxy-2-methyl-3-(all-trans-polyprenyl)benzene-1,4-diol + S-adenosyl-L-homocysteine + H(+)</text>
        <dbReference type="Rhea" id="RHEA:28286"/>
        <dbReference type="Rhea" id="RHEA-COMP:10858"/>
        <dbReference type="Rhea" id="RHEA-COMP:10859"/>
        <dbReference type="ChEBI" id="CHEBI:15378"/>
        <dbReference type="ChEBI" id="CHEBI:57856"/>
        <dbReference type="ChEBI" id="CHEBI:59789"/>
        <dbReference type="ChEBI" id="CHEBI:84166"/>
        <dbReference type="ChEBI" id="CHEBI:84167"/>
        <dbReference type="EC" id="2.1.1.201"/>
    </reaction>
</comment>
<comment type="pathway">
    <text evidence="1">Quinol/quinone metabolism; menaquinone biosynthesis; menaquinol from 1,4-dihydroxy-2-naphthoate: step 2/2.</text>
</comment>
<comment type="pathway">
    <text evidence="1">Cofactor biosynthesis; ubiquinone biosynthesis.</text>
</comment>
<comment type="similarity">
    <text evidence="1">Belongs to the class I-like SAM-binding methyltransferase superfamily. MenG/UbiE family.</text>
</comment>